<protein>
    <recommendedName>
        <fullName evidence="1">Large ribosomal subunit protein bL20</fullName>
    </recommendedName>
    <alternativeName>
        <fullName evidence="2">50S ribosomal protein L20</fullName>
    </alternativeName>
</protein>
<sequence length="120" mass="13502">MSRVKSGKVTHARHRKVIKAAKGYYAARSTNFRTATQAVDKANQYATRDRKARKRNFRALWIQRINAAVRLFDLEMTYSRFINGLAKAGIEVDRKVLADLAVHEPEAFNAIAARAKAALA</sequence>
<organism>
    <name type="scientific">Cereibacter sphaeroides (strain ATCC 17025 / ATH 2.4.3)</name>
    <name type="common">Rhodobacter sphaeroides</name>
    <dbReference type="NCBI Taxonomy" id="349102"/>
    <lineage>
        <taxon>Bacteria</taxon>
        <taxon>Pseudomonadati</taxon>
        <taxon>Pseudomonadota</taxon>
        <taxon>Alphaproteobacteria</taxon>
        <taxon>Rhodobacterales</taxon>
        <taxon>Paracoccaceae</taxon>
        <taxon>Cereibacter</taxon>
    </lineage>
</organism>
<feature type="chain" id="PRO_1000049052" description="Large ribosomal subunit protein bL20">
    <location>
        <begin position="1"/>
        <end position="120"/>
    </location>
</feature>
<reference key="1">
    <citation type="submission" date="2007-04" db="EMBL/GenBank/DDBJ databases">
        <title>Complete sequence of chromosome of Rhodobacter sphaeroides ATCC 17025.</title>
        <authorList>
            <consortium name="US DOE Joint Genome Institute"/>
            <person name="Copeland A."/>
            <person name="Lucas S."/>
            <person name="Lapidus A."/>
            <person name="Barry K."/>
            <person name="Detter J.C."/>
            <person name="Glavina del Rio T."/>
            <person name="Hammon N."/>
            <person name="Israni S."/>
            <person name="Dalin E."/>
            <person name="Tice H."/>
            <person name="Pitluck S."/>
            <person name="Chertkov O."/>
            <person name="Brettin T."/>
            <person name="Bruce D."/>
            <person name="Han C."/>
            <person name="Schmutz J."/>
            <person name="Larimer F."/>
            <person name="Land M."/>
            <person name="Hauser L."/>
            <person name="Kyrpides N."/>
            <person name="Kim E."/>
            <person name="Richardson P."/>
            <person name="Mackenzie C."/>
            <person name="Choudhary M."/>
            <person name="Donohue T.J."/>
            <person name="Kaplan S."/>
        </authorList>
    </citation>
    <scope>NUCLEOTIDE SEQUENCE [LARGE SCALE GENOMIC DNA]</scope>
    <source>
        <strain>ATCC 17025 / ATH 2.4.3</strain>
    </source>
</reference>
<gene>
    <name evidence="1" type="primary">rplT</name>
    <name type="ordered locus">Rsph17025_2488</name>
</gene>
<accession>A4WVG2</accession>
<name>RL20_CERS5</name>
<dbReference type="EMBL" id="CP000661">
    <property type="protein sequence ID" value="ABP71376.1"/>
    <property type="molecule type" value="Genomic_DNA"/>
</dbReference>
<dbReference type="SMR" id="A4WVG2"/>
<dbReference type="STRING" id="349102.Rsph17025_2488"/>
<dbReference type="KEGG" id="rsq:Rsph17025_2488"/>
<dbReference type="eggNOG" id="COG0292">
    <property type="taxonomic scope" value="Bacteria"/>
</dbReference>
<dbReference type="HOGENOM" id="CLU_123265_0_1_5"/>
<dbReference type="BioCyc" id="RSPH349102:G1G8M-2566-MONOMER"/>
<dbReference type="GO" id="GO:1990904">
    <property type="term" value="C:ribonucleoprotein complex"/>
    <property type="evidence" value="ECO:0007669"/>
    <property type="project" value="UniProtKB-KW"/>
</dbReference>
<dbReference type="GO" id="GO:0005840">
    <property type="term" value="C:ribosome"/>
    <property type="evidence" value="ECO:0007669"/>
    <property type="project" value="UniProtKB-KW"/>
</dbReference>
<dbReference type="GO" id="GO:0019843">
    <property type="term" value="F:rRNA binding"/>
    <property type="evidence" value="ECO:0007669"/>
    <property type="project" value="UniProtKB-UniRule"/>
</dbReference>
<dbReference type="GO" id="GO:0003735">
    <property type="term" value="F:structural constituent of ribosome"/>
    <property type="evidence" value="ECO:0007669"/>
    <property type="project" value="InterPro"/>
</dbReference>
<dbReference type="GO" id="GO:0000027">
    <property type="term" value="P:ribosomal large subunit assembly"/>
    <property type="evidence" value="ECO:0007669"/>
    <property type="project" value="UniProtKB-UniRule"/>
</dbReference>
<dbReference type="GO" id="GO:0006412">
    <property type="term" value="P:translation"/>
    <property type="evidence" value="ECO:0007669"/>
    <property type="project" value="InterPro"/>
</dbReference>
<dbReference type="CDD" id="cd07026">
    <property type="entry name" value="Ribosomal_L20"/>
    <property type="match status" value="1"/>
</dbReference>
<dbReference type="FunFam" id="1.10.1900.20:FF:000001">
    <property type="entry name" value="50S ribosomal protein L20"/>
    <property type="match status" value="1"/>
</dbReference>
<dbReference type="Gene3D" id="6.10.160.10">
    <property type="match status" value="1"/>
</dbReference>
<dbReference type="Gene3D" id="1.10.1900.20">
    <property type="entry name" value="Ribosomal protein L20"/>
    <property type="match status" value="1"/>
</dbReference>
<dbReference type="HAMAP" id="MF_00382">
    <property type="entry name" value="Ribosomal_bL20"/>
    <property type="match status" value="1"/>
</dbReference>
<dbReference type="InterPro" id="IPR005813">
    <property type="entry name" value="Ribosomal_bL20"/>
</dbReference>
<dbReference type="InterPro" id="IPR049946">
    <property type="entry name" value="RIBOSOMAL_L20_CS"/>
</dbReference>
<dbReference type="InterPro" id="IPR035566">
    <property type="entry name" value="Ribosomal_protein_bL20_C"/>
</dbReference>
<dbReference type="NCBIfam" id="TIGR01032">
    <property type="entry name" value="rplT_bact"/>
    <property type="match status" value="1"/>
</dbReference>
<dbReference type="PANTHER" id="PTHR10986">
    <property type="entry name" value="39S RIBOSOMAL PROTEIN L20"/>
    <property type="match status" value="1"/>
</dbReference>
<dbReference type="Pfam" id="PF00453">
    <property type="entry name" value="Ribosomal_L20"/>
    <property type="match status" value="1"/>
</dbReference>
<dbReference type="PRINTS" id="PR00062">
    <property type="entry name" value="RIBOSOMALL20"/>
</dbReference>
<dbReference type="SUPFAM" id="SSF74731">
    <property type="entry name" value="Ribosomal protein L20"/>
    <property type="match status" value="1"/>
</dbReference>
<dbReference type="PROSITE" id="PS00937">
    <property type="entry name" value="RIBOSOMAL_L20"/>
    <property type="match status" value="1"/>
</dbReference>
<evidence type="ECO:0000255" key="1">
    <source>
        <dbReference type="HAMAP-Rule" id="MF_00382"/>
    </source>
</evidence>
<evidence type="ECO:0000305" key="2"/>
<comment type="function">
    <text evidence="1">Binds directly to 23S ribosomal RNA and is necessary for the in vitro assembly process of the 50S ribosomal subunit. It is not involved in the protein synthesizing functions of that subunit.</text>
</comment>
<comment type="similarity">
    <text evidence="1">Belongs to the bacterial ribosomal protein bL20 family.</text>
</comment>
<keyword id="KW-0687">Ribonucleoprotein</keyword>
<keyword id="KW-0689">Ribosomal protein</keyword>
<keyword id="KW-0694">RNA-binding</keyword>
<keyword id="KW-0699">rRNA-binding</keyword>
<proteinExistence type="inferred from homology"/>